<evidence type="ECO:0000250" key="1">
    <source>
        <dbReference type="UniProtKB" id="P48449"/>
    </source>
</evidence>
<evidence type="ECO:0000255" key="2"/>
<evidence type="ECO:0000269" key="3">
    <source>
    </source>
</evidence>
<evidence type="ECO:0000303" key="4">
    <source>
    </source>
</evidence>
<evidence type="ECO:0000305" key="5"/>
<evidence type="ECO:0000305" key="6">
    <source>
    </source>
</evidence>
<accession>A0A125SXN3</accession>
<dbReference type="EC" id="5.4.99.8" evidence="3"/>
<dbReference type="EMBL" id="LC053637">
    <property type="protein sequence ID" value="BAU46473.1"/>
    <property type="molecule type" value="mRNA"/>
</dbReference>
<dbReference type="UniPathway" id="UPA00213"/>
<dbReference type="GO" id="GO:0005811">
    <property type="term" value="C:lipid droplet"/>
    <property type="evidence" value="ECO:0007669"/>
    <property type="project" value="InterPro"/>
</dbReference>
<dbReference type="GO" id="GO:0016871">
    <property type="term" value="F:cycloartenol synthase activity"/>
    <property type="evidence" value="ECO:0000314"/>
    <property type="project" value="UniProtKB"/>
</dbReference>
<dbReference type="GO" id="GO:0019745">
    <property type="term" value="P:pentacyclic triterpenoid biosynthetic process"/>
    <property type="evidence" value="ECO:0000314"/>
    <property type="project" value="UniProtKB"/>
</dbReference>
<dbReference type="GO" id="GO:0010686">
    <property type="term" value="P:tetracyclic triterpenoid biosynthetic process"/>
    <property type="evidence" value="ECO:0000314"/>
    <property type="project" value="UniProtKB"/>
</dbReference>
<dbReference type="CDD" id="cd02892">
    <property type="entry name" value="SQCY_1"/>
    <property type="match status" value="1"/>
</dbReference>
<dbReference type="FunFam" id="1.50.10.20:FF:000011">
    <property type="entry name" value="Terpene cyclase/mutase family member"/>
    <property type="match status" value="1"/>
</dbReference>
<dbReference type="Gene3D" id="1.50.10.20">
    <property type="match status" value="2"/>
</dbReference>
<dbReference type="InterPro" id="IPR032696">
    <property type="entry name" value="SQ_cyclase_C"/>
</dbReference>
<dbReference type="InterPro" id="IPR032697">
    <property type="entry name" value="SQ_cyclase_N"/>
</dbReference>
<dbReference type="InterPro" id="IPR018333">
    <property type="entry name" value="Squalene_cyclase"/>
</dbReference>
<dbReference type="InterPro" id="IPR002365">
    <property type="entry name" value="Terpene_synthase_CS"/>
</dbReference>
<dbReference type="InterPro" id="IPR008930">
    <property type="entry name" value="Terpenoid_cyclase/PrenylTrfase"/>
</dbReference>
<dbReference type="NCBIfam" id="TIGR01787">
    <property type="entry name" value="squalene_cyclas"/>
    <property type="match status" value="1"/>
</dbReference>
<dbReference type="PANTHER" id="PTHR11764:SF20">
    <property type="entry name" value="LANOSTEROL SYNTHASE"/>
    <property type="match status" value="1"/>
</dbReference>
<dbReference type="PANTHER" id="PTHR11764">
    <property type="entry name" value="TERPENE CYCLASE/MUTASE FAMILY MEMBER"/>
    <property type="match status" value="1"/>
</dbReference>
<dbReference type="Pfam" id="PF13243">
    <property type="entry name" value="SQHop_cyclase_C"/>
    <property type="match status" value="1"/>
</dbReference>
<dbReference type="Pfam" id="PF13249">
    <property type="entry name" value="SQHop_cyclase_N"/>
    <property type="match status" value="1"/>
</dbReference>
<dbReference type="SFLD" id="SFLDG01016">
    <property type="entry name" value="Prenyltransferase_Like_2"/>
    <property type="match status" value="1"/>
</dbReference>
<dbReference type="SUPFAM" id="SSF48239">
    <property type="entry name" value="Terpenoid cyclases/Protein prenyltransferases"/>
    <property type="match status" value="2"/>
</dbReference>
<dbReference type="PROSITE" id="PS01074">
    <property type="entry name" value="TERPENE_SYNTHASES"/>
    <property type="match status" value="1"/>
</dbReference>
<name>LCA_LYCCL</name>
<protein>
    <recommendedName>
        <fullName evidence="6">Cycloartenol synthase LCA</fullName>
        <ecNumber evidence="3">5.4.99.8</ecNumber>
    </recommendedName>
</protein>
<feature type="chain" id="PRO_0000445703" description="Cycloartenol synthase LCA">
    <location>
        <begin position="1"/>
        <end position="755"/>
    </location>
</feature>
<feature type="repeat" description="PFTB 1" evidence="2">
    <location>
        <begin position="97"/>
        <end position="142"/>
    </location>
</feature>
<feature type="repeat" description="PFTB 2" evidence="2">
    <location>
        <begin position="147"/>
        <end position="188"/>
    </location>
</feature>
<feature type="repeat" description="PFTB 3" evidence="2">
    <location>
        <begin position="390"/>
        <end position="431"/>
    </location>
</feature>
<feature type="repeat" description="PFTB 4" evidence="2">
    <location>
        <begin position="511"/>
        <end position="556"/>
    </location>
</feature>
<feature type="repeat" description="PFTB 5" evidence="2">
    <location>
        <begin position="588"/>
        <end position="628"/>
    </location>
</feature>
<feature type="repeat" description="PFTB 6" evidence="2">
    <location>
        <begin position="637"/>
        <end position="678"/>
    </location>
</feature>
<feature type="repeat" description="PFTB 7" evidence="2">
    <location>
        <begin position="699"/>
        <end position="740"/>
    </location>
</feature>
<feature type="active site" description="Proton donor" evidence="1">
    <location>
        <position position="482"/>
    </location>
</feature>
<feature type="site" description="Transition state stabilizer" evidence="1">
    <location>
        <position position="415"/>
    </location>
</feature>
<feature type="site" description="Transition state stabilizer" evidence="1">
    <location>
        <position position="471"/>
    </location>
</feature>
<feature type="site" description="Transition state stabilizer" evidence="1">
    <location>
        <position position="609"/>
    </location>
</feature>
<gene>
    <name evidence="4" type="primary">LCA</name>
</gene>
<organism>
    <name type="scientific">Lycopodium clavatum</name>
    <name type="common">Stag's-horn clubmoss</name>
    <dbReference type="NCBI Taxonomy" id="3252"/>
    <lineage>
        <taxon>Eukaryota</taxon>
        <taxon>Viridiplantae</taxon>
        <taxon>Streptophyta</taxon>
        <taxon>Embryophyta</taxon>
        <taxon>Tracheophyta</taxon>
        <taxon>Lycopodiopsida</taxon>
        <taxon>Lycopodiales</taxon>
        <taxon>Lycopodiaceae</taxon>
        <taxon>Lycopodioideae</taxon>
        <taxon>Lycopodium</taxon>
    </lineage>
</organism>
<keyword id="KW-0413">Isomerase</keyword>
<keyword id="KW-0677">Repeat</keyword>
<proteinExistence type="evidence at protein level"/>
<comment type="function">
    <text evidence="3">Oxidosqualene cyclase involved in the biosynthesis of cycloartenol.</text>
</comment>
<comment type="catalytic activity">
    <reaction evidence="3">
        <text>(S)-2,3-epoxysqualene = cycloartenol</text>
        <dbReference type="Rhea" id="RHEA:21308"/>
        <dbReference type="ChEBI" id="CHEBI:15441"/>
        <dbReference type="ChEBI" id="CHEBI:17030"/>
        <dbReference type="EC" id="5.4.99.8"/>
    </reaction>
</comment>
<comment type="pathway">
    <text evidence="3">Secondary metabolite biosynthesis; terpenoid biosynthesis.</text>
</comment>
<comment type="similarity">
    <text evidence="5">Belongs to the terpene cyclase/mutase family.</text>
</comment>
<reference key="1">
    <citation type="journal article" date="2016" name="ChemBioChem">
        <title>Onocerin biosynthesis requires two highly dedicated triterpene cyclases in a fern Lycopodium clavatum.</title>
        <authorList>
            <person name="Araki T."/>
            <person name="Saga Y."/>
            <person name="Marugami M."/>
            <person name="Otaka J."/>
            <person name="Araya H."/>
            <person name="Saito K."/>
            <person name="Yamazaki M."/>
            <person name="Suzuki H."/>
            <person name="Kushiro T."/>
        </authorList>
    </citation>
    <scope>NUCLEOTIDE SEQUENCE [MRNA]</scope>
    <scope>FUNCTION</scope>
    <scope>CATALYTIC ACTIVITY</scope>
    <scope>PATHWAY</scope>
</reference>
<sequence length="755" mass="85663">MWSLKIAEGGGPWMSSLNDHVGRQIWQYDDNGGTPQERSAIDALQAQFTRNRHDVRHSSDSIMRFQFSKDNPLPPLPLQVKVKGHEQLTRDIVEKTLRRALRFYSTIQANDGHWPGDYGGPMFLMPGLVITLYITGALRVILSEQHQLEMCRYLYNHQNNDGGWGLHIEGHSTMFGTILTYVTLRLLNQGSGAHAAMEKARAWILDHGGATAAPSWGKFWLAALGIFDWSGVDPLPPEMWLLPYILPVYPGRMWCHCRMVYLPMSYIYGRRYSSPLTKLTSDIRNEIYVVPYEEVNWDSARNDCAREDLYYPHPFLQDLLWATLHKCVEPILMHWPGSLLRQRALAMVIEHIHYKDENTRYVCIGPVNKVINMLCCWVENPNSEAFKKHLPRVLDYLWLAEDGMKMQGYNGTQLWDTAFAVQALVSTQLLDECGSMLKKAHHYIERSQVQEDCAGDLRRWFRHISKGAWPFSTRDHGWPISDCSSEGLKASLELSSLSGDLVGDPIPAQRLYDCVNVILSYQNPNGGIATYESTRSYAWLELLNPAETFGDIVIDYPCVECTSACVQALAAFKRKYPEHRSKEIATTIRQGSMYIKNVQRSDGSWYGSWGVCFTYGTWFGIMGLLASGETYSTSASLRNACSFLLSKQLPSGGWGESYLSSQDKTYTHLEGDEAHLVNTSWAMLALIASGQVERDPTPLHKAXVLLVNAQFENGDYPQQEIIGVFNRNCMISYSAYRNIFPIWALGAYQCKVLGH</sequence>